<comment type="similarity">
    <text evidence="1">Belongs to the bacterial ribosomal protein bS16 family.</text>
</comment>
<name>RS16_RHIR8</name>
<protein>
    <recommendedName>
        <fullName evidence="1">Small ribosomal subunit protein bS16</fullName>
    </recommendedName>
    <alternativeName>
        <fullName evidence="3">30S ribosomal protein S16</fullName>
    </alternativeName>
</protein>
<sequence length="120" mass="13318">MALKIRLARGGSKKRPYYHVVIADARSPRDGRFLEKVGSWNPMLAKDDAKRVELDADRIKHWLDNGAQPTDRVLRFLDEAGVAKREVKSNPEKAKPGKRAQERAAEKAQKAADAAAATAE</sequence>
<organism>
    <name type="scientific">Rhizobium rhizogenes (strain K84 / ATCC BAA-868)</name>
    <name type="common">Agrobacterium radiobacter</name>
    <dbReference type="NCBI Taxonomy" id="311403"/>
    <lineage>
        <taxon>Bacteria</taxon>
        <taxon>Pseudomonadati</taxon>
        <taxon>Pseudomonadota</taxon>
        <taxon>Alphaproteobacteria</taxon>
        <taxon>Hyphomicrobiales</taxon>
        <taxon>Rhizobiaceae</taxon>
        <taxon>Rhizobium/Agrobacterium group</taxon>
        <taxon>Rhizobium</taxon>
    </lineage>
</organism>
<proteinExistence type="inferred from homology"/>
<keyword id="KW-0687">Ribonucleoprotein</keyword>
<keyword id="KW-0689">Ribosomal protein</keyword>
<dbReference type="EMBL" id="CP000628">
    <property type="protein sequence ID" value="ACM28130.1"/>
    <property type="molecule type" value="Genomic_DNA"/>
</dbReference>
<dbReference type="RefSeq" id="WP_007693780.1">
    <property type="nucleotide sequence ID" value="NC_011985.1"/>
</dbReference>
<dbReference type="SMR" id="B9JCL9"/>
<dbReference type="STRING" id="311403.Arad_4412"/>
<dbReference type="GeneID" id="86849995"/>
<dbReference type="KEGG" id="ara:Arad_4412"/>
<dbReference type="eggNOG" id="COG0228">
    <property type="taxonomic scope" value="Bacteria"/>
</dbReference>
<dbReference type="HOGENOM" id="CLU_100590_3_1_5"/>
<dbReference type="Proteomes" id="UP000001600">
    <property type="component" value="Chromosome 1"/>
</dbReference>
<dbReference type="GO" id="GO:0005737">
    <property type="term" value="C:cytoplasm"/>
    <property type="evidence" value="ECO:0007669"/>
    <property type="project" value="UniProtKB-ARBA"/>
</dbReference>
<dbReference type="GO" id="GO:0015935">
    <property type="term" value="C:small ribosomal subunit"/>
    <property type="evidence" value="ECO:0007669"/>
    <property type="project" value="TreeGrafter"/>
</dbReference>
<dbReference type="GO" id="GO:0003735">
    <property type="term" value="F:structural constituent of ribosome"/>
    <property type="evidence" value="ECO:0007669"/>
    <property type="project" value="InterPro"/>
</dbReference>
<dbReference type="GO" id="GO:0006412">
    <property type="term" value="P:translation"/>
    <property type="evidence" value="ECO:0007669"/>
    <property type="project" value="UniProtKB-UniRule"/>
</dbReference>
<dbReference type="Gene3D" id="3.30.1320.10">
    <property type="match status" value="1"/>
</dbReference>
<dbReference type="HAMAP" id="MF_00385">
    <property type="entry name" value="Ribosomal_bS16"/>
    <property type="match status" value="1"/>
</dbReference>
<dbReference type="InterPro" id="IPR000307">
    <property type="entry name" value="Ribosomal_bS16"/>
</dbReference>
<dbReference type="InterPro" id="IPR023803">
    <property type="entry name" value="Ribosomal_bS16_dom_sf"/>
</dbReference>
<dbReference type="NCBIfam" id="TIGR00002">
    <property type="entry name" value="S16"/>
    <property type="match status" value="1"/>
</dbReference>
<dbReference type="PANTHER" id="PTHR12919">
    <property type="entry name" value="30S RIBOSOMAL PROTEIN S16"/>
    <property type="match status" value="1"/>
</dbReference>
<dbReference type="PANTHER" id="PTHR12919:SF20">
    <property type="entry name" value="SMALL RIBOSOMAL SUBUNIT PROTEIN BS16M"/>
    <property type="match status" value="1"/>
</dbReference>
<dbReference type="Pfam" id="PF00886">
    <property type="entry name" value="Ribosomal_S16"/>
    <property type="match status" value="1"/>
</dbReference>
<dbReference type="SUPFAM" id="SSF54565">
    <property type="entry name" value="Ribosomal protein S16"/>
    <property type="match status" value="1"/>
</dbReference>
<evidence type="ECO:0000255" key="1">
    <source>
        <dbReference type="HAMAP-Rule" id="MF_00385"/>
    </source>
</evidence>
<evidence type="ECO:0000256" key="2">
    <source>
        <dbReference type="SAM" id="MobiDB-lite"/>
    </source>
</evidence>
<evidence type="ECO:0000305" key="3"/>
<accession>B9JCL9</accession>
<feature type="chain" id="PRO_1000196316" description="Small ribosomal subunit protein bS16">
    <location>
        <begin position="1"/>
        <end position="120"/>
    </location>
</feature>
<feature type="region of interest" description="Disordered" evidence="2">
    <location>
        <begin position="84"/>
        <end position="120"/>
    </location>
</feature>
<feature type="compositionally biased region" description="Basic and acidic residues" evidence="2">
    <location>
        <begin position="84"/>
        <end position="110"/>
    </location>
</feature>
<feature type="compositionally biased region" description="Low complexity" evidence="2">
    <location>
        <begin position="111"/>
        <end position="120"/>
    </location>
</feature>
<reference key="1">
    <citation type="journal article" date="2009" name="J. Bacteriol.">
        <title>Genome sequences of three Agrobacterium biovars help elucidate the evolution of multichromosome genomes in bacteria.</title>
        <authorList>
            <person name="Slater S.C."/>
            <person name="Goldman B.S."/>
            <person name="Goodner B."/>
            <person name="Setubal J.C."/>
            <person name="Farrand S.K."/>
            <person name="Nester E.W."/>
            <person name="Burr T.J."/>
            <person name="Banta L."/>
            <person name="Dickerman A.W."/>
            <person name="Paulsen I."/>
            <person name="Otten L."/>
            <person name="Suen G."/>
            <person name="Welch R."/>
            <person name="Almeida N.F."/>
            <person name="Arnold F."/>
            <person name="Burton O.T."/>
            <person name="Du Z."/>
            <person name="Ewing A."/>
            <person name="Godsy E."/>
            <person name="Heisel S."/>
            <person name="Houmiel K.L."/>
            <person name="Jhaveri J."/>
            <person name="Lu J."/>
            <person name="Miller N.M."/>
            <person name="Norton S."/>
            <person name="Chen Q."/>
            <person name="Phoolcharoen W."/>
            <person name="Ohlin V."/>
            <person name="Ondrusek D."/>
            <person name="Pride N."/>
            <person name="Stricklin S.L."/>
            <person name="Sun J."/>
            <person name="Wheeler C."/>
            <person name="Wilson L."/>
            <person name="Zhu H."/>
            <person name="Wood D.W."/>
        </authorList>
    </citation>
    <scope>NUCLEOTIDE SEQUENCE [LARGE SCALE GENOMIC DNA]</scope>
    <source>
        <strain>K84 / ATCC BAA-868</strain>
    </source>
</reference>
<gene>
    <name evidence="1" type="primary">rpsP</name>
    <name type="ordered locus">Arad_4412</name>
</gene>